<reference key="1">
    <citation type="journal article" date="2005" name="Genome Res.">
        <title>Comparative and functional genomic analyses of the pathogenicity of phytopathogen Xanthomonas campestris pv. campestris.</title>
        <authorList>
            <person name="Qian W."/>
            <person name="Jia Y."/>
            <person name="Ren S.-X."/>
            <person name="He Y.-Q."/>
            <person name="Feng J.-X."/>
            <person name="Lu L.-F."/>
            <person name="Sun Q."/>
            <person name="Ying G."/>
            <person name="Tang D.-J."/>
            <person name="Tang H."/>
            <person name="Wu W."/>
            <person name="Hao P."/>
            <person name="Wang L."/>
            <person name="Jiang B.-L."/>
            <person name="Zeng S."/>
            <person name="Gu W.-Y."/>
            <person name="Lu G."/>
            <person name="Rong L."/>
            <person name="Tian Y."/>
            <person name="Yao Z."/>
            <person name="Fu G."/>
            <person name="Chen B."/>
            <person name="Fang R."/>
            <person name="Qiang B."/>
            <person name="Chen Z."/>
            <person name="Zhao G.-P."/>
            <person name="Tang J.-L."/>
            <person name="He C."/>
        </authorList>
    </citation>
    <scope>NUCLEOTIDE SEQUENCE [LARGE SCALE GENOMIC DNA]</scope>
    <source>
        <strain>8004</strain>
    </source>
</reference>
<sequence length="285" mass="31536">MSTNDNWYIEHFQPTGSAIGYRISGKLDEVQSPFQKIEIYQTTDWGKLMIIDGAVMLTSRDNFFYHEMISHPALFTHAAPKRVVIIGGGDCGTLREVLKHPGVESATQCDIDEQVTRMSEKYFPELCDSNDDARAELLFDDGVAYMANCPAGSVDIVIVDSTDPVGPAEGLFNKSFYESCFKALKDDGILVQQSESPLALLDLIKEMRTEMGKAGFQSFKTLPFPQPCYPTGWWSVTMASKQANADFAFRQADAQAKGFDTLYYTAHLHTGVLVAPPFVAKALGE</sequence>
<protein>
    <recommendedName>
        <fullName evidence="1">Polyamine aminopropyltransferase</fullName>
    </recommendedName>
    <alternativeName>
        <fullName evidence="1">Putrescine aminopropyltransferase</fullName>
        <shortName evidence="1">PAPT</shortName>
    </alternativeName>
    <alternativeName>
        <fullName evidence="1">Spermidine synthase</fullName>
        <shortName evidence="1">SPDS</shortName>
        <shortName evidence="1">SPDSY</shortName>
        <ecNumber evidence="1">2.5.1.16</ecNumber>
    </alternativeName>
</protein>
<gene>
    <name evidence="1" type="primary">speE</name>
    <name type="ordered locus">XC_3954</name>
</gene>
<dbReference type="EC" id="2.5.1.16" evidence="1"/>
<dbReference type="EMBL" id="CP000050">
    <property type="protein sequence ID" value="AAY50993.1"/>
    <property type="molecule type" value="Genomic_DNA"/>
</dbReference>
<dbReference type="RefSeq" id="WP_011038944.1">
    <property type="nucleotide sequence ID" value="NZ_CP155948.1"/>
</dbReference>
<dbReference type="SMR" id="Q4UPN0"/>
<dbReference type="KEGG" id="xcb:XC_3954"/>
<dbReference type="HOGENOM" id="CLU_048199_0_0_6"/>
<dbReference type="UniPathway" id="UPA00248">
    <property type="reaction ID" value="UER00314"/>
</dbReference>
<dbReference type="Proteomes" id="UP000000420">
    <property type="component" value="Chromosome"/>
</dbReference>
<dbReference type="GO" id="GO:0005829">
    <property type="term" value="C:cytosol"/>
    <property type="evidence" value="ECO:0007669"/>
    <property type="project" value="TreeGrafter"/>
</dbReference>
<dbReference type="GO" id="GO:0004766">
    <property type="term" value="F:spermidine synthase activity"/>
    <property type="evidence" value="ECO:0007669"/>
    <property type="project" value="UniProtKB-UniRule"/>
</dbReference>
<dbReference type="GO" id="GO:0008295">
    <property type="term" value="P:spermidine biosynthetic process"/>
    <property type="evidence" value="ECO:0007669"/>
    <property type="project" value="UniProtKB-UniRule"/>
</dbReference>
<dbReference type="CDD" id="cd02440">
    <property type="entry name" value="AdoMet_MTases"/>
    <property type="match status" value="1"/>
</dbReference>
<dbReference type="FunFam" id="3.40.50.150:FF:000290">
    <property type="entry name" value="Polyamine aminopropyltransferase"/>
    <property type="match status" value="1"/>
</dbReference>
<dbReference type="Gene3D" id="2.30.140.10">
    <property type="entry name" value="Spermidine synthase, tetramerisation domain"/>
    <property type="match status" value="1"/>
</dbReference>
<dbReference type="Gene3D" id="3.40.50.150">
    <property type="entry name" value="Vaccinia Virus protein VP39"/>
    <property type="match status" value="1"/>
</dbReference>
<dbReference type="HAMAP" id="MF_00198">
    <property type="entry name" value="Spermidine_synth"/>
    <property type="match status" value="1"/>
</dbReference>
<dbReference type="InterPro" id="IPR030374">
    <property type="entry name" value="PABS"/>
</dbReference>
<dbReference type="InterPro" id="IPR030373">
    <property type="entry name" value="PABS_CS"/>
</dbReference>
<dbReference type="InterPro" id="IPR029063">
    <property type="entry name" value="SAM-dependent_MTases_sf"/>
</dbReference>
<dbReference type="InterPro" id="IPR001045">
    <property type="entry name" value="Spermi_synthase"/>
</dbReference>
<dbReference type="InterPro" id="IPR035246">
    <property type="entry name" value="Spermidine_synt_N"/>
</dbReference>
<dbReference type="InterPro" id="IPR037163">
    <property type="entry name" value="Spermidine_synt_N_sf"/>
</dbReference>
<dbReference type="NCBIfam" id="NF002010">
    <property type="entry name" value="PRK00811.1"/>
    <property type="match status" value="1"/>
</dbReference>
<dbReference type="NCBIfam" id="TIGR00417">
    <property type="entry name" value="speE"/>
    <property type="match status" value="1"/>
</dbReference>
<dbReference type="PANTHER" id="PTHR11558:SF11">
    <property type="entry name" value="SPERMIDINE SYNTHASE"/>
    <property type="match status" value="1"/>
</dbReference>
<dbReference type="PANTHER" id="PTHR11558">
    <property type="entry name" value="SPERMIDINE/SPERMINE SYNTHASE"/>
    <property type="match status" value="1"/>
</dbReference>
<dbReference type="Pfam" id="PF17284">
    <property type="entry name" value="Spermine_synt_N"/>
    <property type="match status" value="1"/>
</dbReference>
<dbReference type="Pfam" id="PF01564">
    <property type="entry name" value="Spermine_synth"/>
    <property type="match status" value="1"/>
</dbReference>
<dbReference type="SUPFAM" id="SSF53335">
    <property type="entry name" value="S-adenosyl-L-methionine-dependent methyltransferases"/>
    <property type="match status" value="1"/>
</dbReference>
<dbReference type="PROSITE" id="PS01330">
    <property type="entry name" value="PABS_1"/>
    <property type="match status" value="1"/>
</dbReference>
<dbReference type="PROSITE" id="PS51006">
    <property type="entry name" value="PABS_2"/>
    <property type="match status" value="1"/>
</dbReference>
<evidence type="ECO:0000255" key="1">
    <source>
        <dbReference type="HAMAP-Rule" id="MF_00198"/>
    </source>
</evidence>
<name>SPEE_XANC8</name>
<organism>
    <name type="scientific">Xanthomonas campestris pv. campestris (strain 8004)</name>
    <dbReference type="NCBI Taxonomy" id="314565"/>
    <lineage>
        <taxon>Bacteria</taxon>
        <taxon>Pseudomonadati</taxon>
        <taxon>Pseudomonadota</taxon>
        <taxon>Gammaproteobacteria</taxon>
        <taxon>Lysobacterales</taxon>
        <taxon>Lysobacteraceae</taxon>
        <taxon>Xanthomonas</taxon>
    </lineage>
</organism>
<keyword id="KW-0963">Cytoplasm</keyword>
<keyword id="KW-0620">Polyamine biosynthesis</keyword>
<keyword id="KW-0745">Spermidine biosynthesis</keyword>
<keyword id="KW-0808">Transferase</keyword>
<accession>Q4UPN0</accession>
<feature type="chain" id="PRO_1000012030" description="Polyamine aminopropyltransferase">
    <location>
        <begin position="1"/>
        <end position="285"/>
    </location>
</feature>
<feature type="domain" description="PABS" evidence="1">
    <location>
        <begin position="5"/>
        <end position="241"/>
    </location>
</feature>
<feature type="active site" description="Proton acceptor" evidence="1">
    <location>
        <position position="160"/>
    </location>
</feature>
<feature type="binding site" evidence="1">
    <location>
        <position position="35"/>
    </location>
    <ligand>
        <name>S-methyl-5'-thioadenosine</name>
        <dbReference type="ChEBI" id="CHEBI:17509"/>
    </ligand>
</feature>
<feature type="binding site" evidence="1">
    <location>
        <position position="66"/>
    </location>
    <ligand>
        <name>spermidine</name>
        <dbReference type="ChEBI" id="CHEBI:57834"/>
    </ligand>
</feature>
<feature type="binding site" evidence="1">
    <location>
        <position position="90"/>
    </location>
    <ligand>
        <name>spermidine</name>
        <dbReference type="ChEBI" id="CHEBI:57834"/>
    </ligand>
</feature>
<feature type="binding site" evidence="1">
    <location>
        <position position="110"/>
    </location>
    <ligand>
        <name>S-methyl-5'-thioadenosine</name>
        <dbReference type="ChEBI" id="CHEBI:17509"/>
    </ligand>
</feature>
<feature type="binding site" evidence="1">
    <location>
        <begin position="141"/>
        <end position="142"/>
    </location>
    <ligand>
        <name>S-methyl-5'-thioadenosine</name>
        <dbReference type="ChEBI" id="CHEBI:17509"/>
    </ligand>
</feature>
<feature type="binding site" evidence="1">
    <location>
        <begin position="160"/>
        <end position="163"/>
    </location>
    <ligand>
        <name>spermidine</name>
        <dbReference type="ChEBI" id="CHEBI:57834"/>
    </ligand>
</feature>
<feature type="binding site" evidence="1">
    <location>
        <position position="167"/>
    </location>
    <ligand>
        <name>S-methyl-5'-thioadenosine</name>
        <dbReference type="ChEBI" id="CHEBI:17509"/>
    </ligand>
</feature>
<comment type="function">
    <text evidence="1">Catalyzes the irreversible transfer of a propylamine group from the amino donor S-adenosylmethioninamine (decarboxy-AdoMet) to putrescine (1,4-diaminobutane) to yield spermidine.</text>
</comment>
<comment type="catalytic activity">
    <reaction evidence="1">
        <text>S-adenosyl 3-(methylsulfanyl)propylamine + putrescine = S-methyl-5'-thioadenosine + spermidine + H(+)</text>
        <dbReference type="Rhea" id="RHEA:12721"/>
        <dbReference type="ChEBI" id="CHEBI:15378"/>
        <dbReference type="ChEBI" id="CHEBI:17509"/>
        <dbReference type="ChEBI" id="CHEBI:57443"/>
        <dbReference type="ChEBI" id="CHEBI:57834"/>
        <dbReference type="ChEBI" id="CHEBI:326268"/>
        <dbReference type="EC" id="2.5.1.16"/>
    </reaction>
</comment>
<comment type="pathway">
    <text evidence="1">Amine and polyamine biosynthesis; spermidine biosynthesis; spermidine from putrescine: step 1/1.</text>
</comment>
<comment type="subunit">
    <text evidence="1">Homodimer or homotetramer.</text>
</comment>
<comment type="subcellular location">
    <subcellularLocation>
        <location evidence="1">Cytoplasm</location>
    </subcellularLocation>
</comment>
<comment type="similarity">
    <text evidence="1">Belongs to the spermidine/spermine synthase family.</text>
</comment>
<proteinExistence type="inferred from homology"/>